<organism>
    <name type="scientific">Gorilla gorilla gorilla</name>
    <name type="common">Western lowland gorilla</name>
    <dbReference type="NCBI Taxonomy" id="9595"/>
    <lineage>
        <taxon>Eukaryota</taxon>
        <taxon>Metazoa</taxon>
        <taxon>Chordata</taxon>
        <taxon>Craniata</taxon>
        <taxon>Vertebrata</taxon>
        <taxon>Euteleostomi</taxon>
        <taxon>Mammalia</taxon>
        <taxon>Eutheria</taxon>
        <taxon>Euarchontoglires</taxon>
        <taxon>Primates</taxon>
        <taxon>Haplorrhini</taxon>
        <taxon>Catarrhini</taxon>
        <taxon>Hominidae</taxon>
        <taxon>Gorilla</taxon>
    </lineage>
</organism>
<sequence>MEAERRCQAEKPKKGRVGSSLLPERHPATGTLTTMVDSSAPPCRRLPGAGGGRSRFSPQGGQRGRPHSRRRHRTTFSPVQLEQLESAFGRNQYPDIWARESLARDTGLSEARIQVWFQNRRAKQRKQECSLLQPLAHLSPAAFSSFLPESTACPYSYAPPPPVTCFPHPYSHALPSQPSTGGAFALSHQSEDWYPTLHPAPAGHLPCPPPPPMLPLSLEPSKSWN</sequence>
<keyword id="KW-0238">DNA-binding</keyword>
<keyword id="KW-0371">Homeobox</keyword>
<keyword id="KW-0539">Nucleus</keyword>
<keyword id="KW-1185">Reference proteome</keyword>
<feature type="chain" id="PRO_0000049270" description="Homeobox protein prophet of Pit-1">
    <location>
        <begin position="1"/>
        <end position="225"/>
    </location>
</feature>
<feature type="DNA-binding region" description="Homeobox" evidence="2">
    <location>
        <begin position="69"/>
        <end position="128"/>
    </location>
</feature>
<feature type="region of interest" description="Disordered" evidence="3">
    <location>
        <begin position="1"/>
        <end position="76"/>
    </location>
</feature>
<feature type="region of interest" description="Disordered" evidence="3">
    <location>
        <begin position="197"/>
        <end position="225"/>
    </location>
</feature>
<feature type="compositionally biased region" description="Basic and acidic residues" evidence="3">
    <location>
        <begin position="1"/>
        <end position="12"/>
    </location>
</feature>
<feature type="compositionally biased region" description="Basic residues" evidence="3">
    <location>
        <begin position="64"/>
        <end position="74"/>
    </location>
</feature>
<feature type="compositionally biased region" description="Low complexity" evidence="3">
    <location>
        <begin position="215"/>
        <end position="225"/>
    </location>
</feature>
<gene>
    <name type="primary">PROP1</name>
</gene>
<protein>
    <recommendedName>
        <fullName>Homeobox protein prophet of Pit-1</fullName>
        <shortName>PROP-1</shortName>
    </recommendedName>
    <alternativeName>
        <fullName>Pituitary-specific homeodomain factor</fullName>
    </alternativeName>
</protein>
<comment type="function">
    <text evidence="1">Possibly involved in the ontogenesis of pituitary gonadotropes, as well as somatotropes, lactotropes and caudomedial thyrotropes.</text>
</comment>
<comment type="subcellular location">
    <subcellularLocation>
        <location evidence="2">Nucleus</location>
    </subcellularLocation>
</comment>
<comment type="similarity">
    <text evidence="4">Belongs to the paired homeobox family.</text>
</comment>
<proteinExistence type="inferred from homology"/>
<reference key="1">
    <citation type="submission" date="2005-08" db="EMBL/GenBank/DDBJ databases">
        <title>Comparative genomics reveal functional transcriptional control sequences in the Prop1 gene.</title>
        <authorList>
            <person name="Camper S.A."/>
            <person name="Ward R.D."/>
            <person name="Cho M."/>
            <person name="Esposito C."/>
            <person name="Lyons R.H."/>
            <person name="Cheng J.-F."/>
            <person name="Rubin E.M."/>
            <person name="Rhodes S.J."/>
            <person name="Raetzman L.T."/>
            <person name="Smith T.P.L."/>
        </authorList>
    </citation>
    <scope>NUCLEOTIDE SEQUENCE [GENOMIC DNA]</scope>
</reference>
<accession>Q3LU39</accession>
<dbReference type="EMBL" id="DQ177426">
    <property type="protein sequence ID" value="ABA26453.1"/>
    <property type="molecule type" value="Genomic_DNA"/>
</dbReference>
<dbReference type="SMR" id="Q3LU39"/>
<dbReference type="FunCoup" id="Q3LU39">
    <property type="interactions" value="173"/>
</dbReference>
<dbReference type="STRING" id="9593.ENSGGOP00000025734"/>
<dbReference type="eggNOG" id="KOG0490">
    <property type="taxonomic scope" value="Eukaryota"/>
</dbReference>
<dbReference type="InParanoid" id="Q3LU39"/>
<dbReference type="Proteomes" id="UP000001519">
    <property type="component" value="Unplaced"/>
</dbReference>
<dbReference type="GO" id="GO:0005634">
    <property type="term" value="C:nucleus"/>
    <property type="evidence" value="ECO:0007669"/>
    <property type="project" value="UniProtKB-SubCell"/>
</dbReference>
<dbReference type="GO" id="GO:0005667">
    <property type="term" value="C:transcription regulator complex"/>
    <property type="evidence" value="ECO:0000318"/>
    <property type="project" value="GO_Central"/>
</dbReference>
<dbReference type="GO" id="GO:0000981">
    <property type="term" value="F:DNA-binding transcription factor activity, RNA polymerase II-specific"/>
    <property type="evidence" value="ECO:0000318"/>
    <property type="project" value="GO_Central"/>
</dbReference>
<dbReference type="GO" id="GO:0000978">
    <property type="term" value="F:RNA polymerase II cis-regulatory region sequence-specific DNA binding"/>
    <property type="evidence" value="ECO:0000318"/>
    <property type="project" value="GO_Central"/>
</dbReference>
<dbReference type="GO" id="GO:0021983">
    <property type="term" value="P:pituitary gland development"/>
    <property type="evidence" value="ECO:0007669"/>
    <property type="project" value="InterPro"/>
</dbReference>
<dbReference type="GO" id="GO:0006357">
    <property type="term" value="P:regulation of transcription by RNA polymerase II"/>
    <property type="evidence" value="ECO:0000318"/>
    <property type="project" value="GO_Central"/>
</dbReference>
<dbReference type="CDD" id="cd00086">
    <property type="entry name" value="homeodomain"/>
    <property type="match status" value="1"/>
</dbReference>
<dbReference type="FunFam" id="1.10.10.60:FF:000138">
    <property type="entry name" value="Homeobox protein prophet of Pit-1"/>
    <property type="match status" value="1"/>
</dbReference>
<dbReference type="Gene3D" id="1.10.10.60">
    <property type="entry name" value="Homeodomain-like"/>
    <property type="match status" value="1"/>
</dbReference>
<dbReference type="InterPro" id="IPR001356">
    <property type="entry name" value="HD"/>
</dbReference>
<dbReference type="InterPro" id="IPR017970">
    <property type="entry name" value="Homeobox_CS"/>
</dbReference>
<dbReference type="InterPro" id="IPR009057">
    <property type="entry name" value="Homeodomain-like_sf"/>
</dbReference>
<dbReference type="InterPro" id="IPR000047">
    <property type="entry name" value="HTH_motif"/>
</dbReference>
<dbReference type="InterPro" id="IPR042412">
    <property type="entry name" value="PROP1"/>
</dbReference>
<dbReference type="PANTHER" id="PTHR47409">
    <property type="entry name" value="HOMEOBOX PROTEIN PROPHET OF PIT-1"/>
    <property type="match status" value="1"/>
</dbReference>
<dbReference type="PANTHER" id="PTHR47409:SF1">
    <property type="entry name" value="HOMEOBOX PROTEIN PROPHET OF PIT-1"/>
    <property type="match status" value="1"/>
</dbReference>
<dbReference type="Pfam" id="PF00046">
    <property type="entry name" value="Homeodomain"/>
    <property type="match status" value="1"/>
</dbReference>
<dbReference type="PRINTS" id="PR00031">
    <property type="entry name" value="HTHREPRESSR"/>
</dbReference>
<dbReference type="SMART" id="SM00389">
    <property type="entry name" value="HOX"/>
    <property type="match status" value="1"/>
</dbReference>
<dbReference type="SUPFAM" id="SSF46689">
    <property type="entry name" value="Homeodomain-like"/>
    <property type="match status" value="1"/>
</dbReference>
<dbReference type="PROSITE" id="PS00027">
    <property type="entry name" value="HOMEOBOX_1"/>
    <property type="match status" value="1"/>
</dbReference>
<dbReference type="PROSITE" id="PS50071">
    <property type="entry name" value="HOMEOBOX_2"/>
    <property type="match status" value="1"/>
</dbReference>
<evidence type="ECO:0000250" key="1"/>
<evidence type="ECO:0000255" key="2">
    <source>
        <dbReference type="PROSITE-ProRule" id="PRU00108"/>
    </source>
</evidence>
<evidence type="ECO:0000256" key="3">
    <source>
        <dbReference type="SAM" id="MobiDB-lite"/>
    </source>
</evidence>
<evidence type="ECO:0000305" key="4"/>
<name>PROP1_GORGO</name>